<accession>Q57NN3</accession>
<keyword id="KW-0998">Cell outer membrane</keyword>
<keyword id="KW-0143">Chaperone</keyword>
<keyword id="KW-0449">Lipoprotein</keyword>
<keyword id="KW-0472">Membrane</keyword>
<keyword id="KW-0564">Palmitate</keyword>
<keyword id="KW-0653">Protein transport</keyword>
<keyword id="KW-0732">Signal</keyword>
<keyword id="KW-0813">Transport</keyword>
<evidence type="ECO:0000255" key="1">
    <source>
        <dbReference type="HAMAP-Rule" id="MF_00233"/>
    </source>
</evidence>
<gene>
    <name evidence="1" type="primary">lolB</name>
    <name type="ordered locus">SCH_1772</name>
</gene>
<dbReference type="EMBL" id="AE017220">
    <property type="protein sequence ID" value="AAX65678.1"/>
    <property type="molecule type" value="Genomic_DNA"/>
</dbReference>
<dbReference type="RefSeq" id="WP_000174484.1">
    <property type="nucleotide sequence ID" value="NC_006905.1"/>
</dbReference>
<dbReference type="SMR" id="Q57NN3"/>
<dbReference type="KEGG" id="sec:SCH_1772"/>
<dbReference type="HOGENOM" id="CLU_092816_1_1_6"/>
<dbReference type="Proteomes" id="UP000000538">
    <property type="component" value="Chromosome"/>
</dbReference>
<dbReference type="GO" id="GO:0009279">
    <property type="term" value="C:cell outer membrane"/>
    <property type="evidence" value="ECO:0007669"/>
    <property type="project" value="UniProtKB-SubCell"/>
</dbReference>
<dbReference type="GO" id="GO:0044874">
    <property type="term" value="P:lipoprotein localization to outer membrane"/>
    <property type="evidence" value="ECO:0007669"/>
    <property type="project" value="UniProtKB-UniRule"/>
</dbReference>
<dbReference type="GO" id="GO:0015031">
    <property type="term" value="P:protein transport"/>
    <property type="evidence" value="ECO:0007669"/>
    <property type="project" value="UniProtKB-KW"/>
</dbReference>
<dbReference type="CDD" id="cd16326">
    <property type="entry name" value="LolB"/>
    <property type="match status" value="1"/>
</dbReference>
<dbReference type="FunFam" id="2.50.20.10:FF:000002">
    <property type="entry name" value="Outer-membrane lipoprotein LolB"/>
    <property type="match status" value="1"/>
</dbReference>
<dbReference type="Gene3D" id="2.50.20.10">
    <property type="entry name" value="Lipoprotein localisation LolA/LolB/LppX"/>
    <property type="match status" value="1"/>
</dbReference>
<dbReference type="HAMAP" id="MF_00233">
    <property type="entry name" value="LolB"/>
    <property type="match status" value="1"/>
</dbReference>
<dbReference type="InterPro" id="IPR029046">
    <property type="entry name" value="LolA/LolB/LppX"/>
</dbReference>
<dbReference type="InterPro" id="IPR004565">
    <property type="entry name" value="OM_lipoprot_LolB"/>
</dbReference>
<dbReference type="NCBIfam" id="TIGR00548">
    <property type="entry name" value="lolB"/>
    <property type="match status" value="1"/>
</dbReference>
<dbReference type="Pfam" id="PF03550">
    <property type="entry name" value="LolB"/>
    <property type="match status" value="1"/>
</dbReference>
<dbReference type="SUPFAM" id="SSF89392">
    <property type="entry name" value="Prokaryotic lipoproteins and lipoprotein localization factors"/>
    <property type="match status" value="1"/>
</dbReference>
<dbReference type="PROSITE" id="PS51257">
    <property type="entry name" value="PROKAR_LIPOPROTEIN"/>
    <property type="match status" value="1"/>
</dbReference>
<sequence>MTLPDFRLIRLLPLASLVLTACTLPGHKGPGKSPDSPQWRQHQQEVRHLNQYQTRGAFAYISDDQKVYARFFWQQTGQDRYRLLLTNPLGSTELELNAQPGNVQLVDNKGQRYTADDAEEMIGKLTGMPIPLNSLRQWILGLPGDATDYKLDDQYRLSEVNYRQDGKNWKVVYGGYDSKTQPAMPANMELSDGSQRIKLKMDNWIVK</sequence>
<reference key="1">
    <citation type="journal article" date="2005" name="Nucleic Acids Res.">
        <title>The genome sequence of Salmonella enterica serovar Choleraesuis, a highly invasive and resistant zoonotic pathogen.</title>
        <authorList>
            <person name="Chiu C.-H."/>
            <person name="Tang P."/>
            <person name="Chu C."/>
            <person name="Hu S."/>
            <person name="Bao Q."/>
            <person name="Yu J."/>
            <person name="Chou Y.-Y."/>
            <person name="Wang H.-S."/>
            <person name="Lee Y.-S."/>
        </authorList>
    </citation>
    <scope>NUCLEOTIDE SEQUENCE [LARGE SCALE GENOMIC DNA]</scope>
    <source>
        <strain>SC-B67</strain>
    </source>
</reference>
<name>LOLB_SALCH</name>
<comment type="function">
    <text evidence="1">Plays a critical role in the incorporation of lipoproteins in the outer membrane after they are released by the LolA protein.</text>
</comment>
<comment type="subunit">
    <text evidence="1">Monomer.</text>
</comment>
<comment type="subcellular location">
    <subcellularLocation>
        <location evidence="1">Cell outer membrane</location>
        <topology evidence="1">Lipid-anchor</topology>
    </subcellularLocation>
</comment>
<comment type="similarity">
    <text evidence="1">Belongs to the LolB family.</text>
</comment>
<organism>
    <name type="scientific">Salmonella choleraesuis (strain SC-B67)</name>
    <dbReference type="NCBI Taxonomy" id="321314"/>
    <lineage>
        <taxon>Bacteria</taxon>
        <taxon>Pseudomonadati</taxon>
        <taxon>Pseudomonadota</taxon>
        <taxon>Gammaproteobacteria</taxon>
        <taxon>Enterobacterales</taxon>
        <taxon>Enterobacteriaceae</taxon>
        <taxon>Salmonella</taxon>
    </lineage>
</organism>
<feature type="signal peptide" evidence="1">
    <location>
        <begin position="1"/>
        <end position="21"/>
    </location>
</feature>
<feature type="chain" id="PRO_1000021676" description="Outer-membrane lipoprotein LolB">
    <location>
        <begin position="22"/>
        <end position="207"/>
    </location>
</feature>
<feature type="lipid moiety-binding region" description="N-palmitoyl cysteine" evidence="1">
    <location>
        <position position="22"/>
    </location>
</feature>
<feature type="lipid moiety-binding region" description="S-diacylglycerol cysteine" evidence="1">
    <location>
        <position position="22"/>
    </location>
</feature>
<proteinExistence type="inferred from homology"/>
<protein>
    <recommendedName>
        <fullName evidence="1">Outer-membrane lipoprotein LolB</fullName>
    </recommendedName>
</protein>